<organism>
    <name type="scientific">Dictyostelium discoideum</name>
    <name type="common">Social amoeba</name>
    <dbReference type="NCBI Taxonomy" id="44689"/>
    <lineage>
        <taxon>Eukaryota</taxon>
        <taxon>Amoebozoa</taxon>
        <taxon>Evosea</taxon>
        <taxon>Eumycetozoa</taxon>
        <taxon>Dictyostelia</taxon>
        <taxon>Dictyosteliales</taxon>
        <taxon>Dictyosteliaceae</taxon>
        <taxon>Dictyostelium</taxon>
    </lineage>
</organism>
<feature type="chain" id="PRO_0000123555" description="Clustered mitochondria protein homolog">
    <location>
        <begin position="1"/>
        <end position="1320"/>
    </location>
</feature>
<feature type="domain" description="Clu" evidence="2">
    <location>
        <begin position="379"/>
        <end position="649"/>
    </location>
</feature>
<feature type="repeat" description="TPR 1">
    <location>
        <begin position="955"/>
        <end position="988"/>
    </location>
</feature>
<feature type="repeat" description="TPR 2">
    <location>
        <begin position="997"/>
        <end position="1030"/>
    </location>
</feature>
<feature type="repeat" description="TPR 3">
    <location>
        <begin position="1039"/>
        <end position="1072"/>
    </location>
</feature>
<feature type="repeat" description="TPR 4">
    <location>
        <begin position="1081"/>
        <end position="1114"/>
    </location>
</feature>
<feature type="repeat" description="TPR 5">
    <location>
        <begin position="1123"/>
        <end position="1156"/>
    </location>
</feature>
<feature type="region of interest" description="Disordered" evidence="3">
    <location>
        <begin position="166"/>
        <end position="241"/>
    </location>
</feature>
<feature type="region of interest" description="Disordered" evidence="3">
    <location>
        <begin position="552"/>
        <end position="582"/>
    </location>
</feature>
<feature type="region of interest" description="Disordered" evidence="3">
    <location>
        <begin position="683"/>
        <end position="708"/>
    </location>
</feature>
<feature type="region of interest" description="Disordered" evidence="3">
    <location>
        <begin position="1204"/>
        <end position="1320"/>
    </location>
</feature>
<feature type="compositionally biased region" description="Basic and acidic residues" evidence="3">
    <location>
        <begin position="185"/>
        <end position="194"/>
    </location>
</feature>
<feature type="compositionally biased region" description="Basic residues" evidence="3">
    <location>
        <begin position="202"/>
        <end position="213"/>
    </location>
</feature>
<feature type="compositionally biased region" description="Basic and acidic residues" evidence="3">
    <location>
        <begin position="226"/>
        <end position="241"/>
    </location>
</feature>
<feature type="compositionally biased region" description="Basic and acidic residues" evidence="3">
    <location>
        <begin position="565"/>
        <end position="575"/>
    </location>
</feature>
<feature type="compositionally biased region" description="Basic and acidic residues" evidence="3">
    <location>
        <begin position="683"/>
        <end position="695"/>
    </location>
</feature>
<feature type="compositionally biased region" description="Basic residues" evidence="3">
    <location>
        <begin position="1237"/>
        <end position="1247"/>
    </location>
</feature>
<feature type="compositionally biased region" description="Low complexity" evidence="3">
    <location>
        <begin position="1248"/>
        <end position="1311"/>
    </location>
</feature>
<feature type="sequence conflict" description="In Ref. 1; AAC26527." evidence="5" ref="1">
    <original>G</original>
    <variation>GEQV</variation>
    <location>
        <position position="22"/>
    </location>
</feature>
<feature type="sequence conflict" description="In Ref. 1; AAC26527." evidence="5" ref="1">
    <original>SE</original>
    <variation>Q</variation>
    <location>
        <begin position="97"/>
        <end position="98"/>
    </location>
</feature>
<feature type="sequence conflict" description="In Ref. 1; AAC26527." evidence="5" ref="1">
    <original>KSNI</original>
    <variation>NQY</variation>
    <location>
        <begin position="158"/>
        <end position="161"/>
    </location>
</feature>
<feature type="sequence conflict" description="In Ref. 1; AAC26527." evidence="5" ref="1">
    <original>E</original>
    <variation>Q</variation>
    <location>
        <position position="1166"/>
    </location>
</feature>
<sequence>MSETIDNPTVEEYNEKETVVSGEQVEQVEQVEQENEQVSQSFQISIKTPAEIGTINIQVQPTDTLIDIQSFLYETSETCLYSSFEFRLYGKQIPEYSELSSIEGLVEGATLEMVPVDYNERSAKLHVKRLRDIMNTGLTEFANMNNPSLFTSFSFPEKSNILTEEQQLEEQKQKFEQQQQQQQQTEDKEEKETIATEQQQNKKNKHHNKKGNKKNNGDESLNNENNEEKLTPQQKERKQKMTEIKGIDKPMLSSYYPESPIAPVQCVKSMIYSGWSPVPGYRKLFGDLFYLDITLLEGTTICVTASTQGFFINQSSNATFNPSVSPKATINHSLHQLLTQVSRLFRRGLNQILTNIGRNHPFDMLPGVLPVHNWVASSKTNRYDINKGTDTFVSVQDVELRGNPRDWNEEIQAPKELPKSTVQERIIRDRAISKVNSEFVECAIRGAQVIVDKAILPINPAENQRSHMFLYNNIFFSYALDTRDSFTDCGGDDAARTSANNDLKGIRLYNLADIDGLYTLGTAIVDYKGQRIIAQSLIPGILTTEKTSKIYYGSMDTPTNEEEEQQQKEENEENKNNNTKSIKADPEFHSRLLQAASLLHLSESKVISEDTNQEVSVCTSFESKGIIGIDGRRYILDLIKATPRDPNYTETKDQLSVLRPEAIATYSEYFKVTWLNQKRQQKLKEKEERQKKEGIDPPTATARDEDVQLTEEDLAQSPVVSFNPNLFSKVKLGGTPEEQQKDIEDLKAIGAFLKGILIPRLIEDLMLFNVAPVDGQTLTQVMHVRGINMRYLGYIAKNESANVPFIQDLLFNEMVSRAAKHCFNRLLRSTNASDMAHSISHFLNCFLGTETGSVSADEKSKKAKQIKSSAINELTQGKLWSEIAQLVSSKFDFEIPTHSVPMESRLIVLRCICLKMGIQILAKDYNFTTDAPFSPEDIVDLFPIVKHVNPRSTDGLDLLEAGKTFFNQRKYELATELLGEALAIYHQVHGPIHPDAGACFTHLAMLAYQNEQYDLAIEYQKNALVITEKTAGLDHHETVQAYTTLAVFCQRSGRYNESIGYMKHVLYLTDLLGGEYNPERASIYTAIAAILEDTERFDLALEFLKQTLKHQEFLFTPDHLMCSTTYHKMAIVCARATNFDDSIIHQKKSTDILEKELGEAHPRTKESLEFYTGLSQTANQIKLFKQHQALKAEQDELARLQKEKADQFKKSQPRVSAMPPSLENGSVSELLNYINGKPKKSQSKKSKSTNTTTTTNTTTATTSKSKITMAKTPNPTTKATTSKSSATASSAATNKSTTKTNPTSSSAADSSKPNKKSSKN</sequence>
<comment type="function">
    <text evidence="1 4">mRNA-binding protein involved in proper cytoplasmic distribution of mitochondria.</text>
</comment>
<comment type="subcellular location">
    <subcellularLocation>
        <location evidence="1">Cytoplasm</location>
    </subcellularLocation>
</comment>
<comment type="disruption phenotype">
    <text evidence="4">Causes mitochondria to cluster within cells.</text>
</comment>
<comment type="similarity">
    <text evidence="1">Belongs to the CLU family.</text>
</comment>
<proteinExistence type="evidence at protein level"/>
<accession>O15818</accession>
<accession>Q54CI7</accession>
<keyword id="KW-0963">Cytoplasm</keyword>
<keyword id="KW-0903">Direct protein sequencing</keyword>
<keyword id="KW-1185">Reference proteome</keyword>
<keyword id="KW-0677">Repeat</keyword>
<keyword id="KW-0802">TPR repeat</keyword>
<gene>
    <name evidence="1" type="primary">clua</name>
    <name type="ORF">DDB_G0292806</name>
</gene>
<dbReference type="EMBL" id="U49332">
    <property type="protein sequence ID" value="AAC26527.1"/>
    <property type="molecule type" value="mRNA"/>
</dbReference>
<dbReference type="EMBL" id="AAFI02000197">
    <property type="protein sequence ID" value="EAL60952.1"/>
    <property type="molecule type" value="Genomic_DNA"/>
</dbReference>
<dbReference type="RefSeq" id="XP_629429.1">
    <property type="nucleotide sequence ID" value="XM_629427.1"/>
</dbReference>
<dbReference type="SMR" id="O15818"/>
<dbReference type="FunCoup" id="O15818">
    <property type="interactions" value="791"/>
</dbReference>
<dbReference type="STRING" id="44689.O15818"/>
<dbReference type="PaxDb" id="44689-DDB0215379"/>
<dbReference type="EnsemblProtists" id="EAL60952">
    <property type="protein sequence ID" value="EAL60952"/>
    <property type="gene ID" value="DDB_G0292806"/>
</dbReference>
<dbReference type="GeneID" id="8628948"/>
<dbReference type="KEGG" id="ddi:DDB_G0292806"/>
<dbReference type="dictyBase" id="DDB_G0292806">
    <property type="gene designation" value="cluA"/>
</dbReference>
<dbReference type="VEuPathDB" id="AmoebaDB:DDB_G0292806"/>
<dbReference type="eggNOG" id="KOG1839">
    <property type="taxonomic scope" value="Eukaryota"/>
</dbReference>
<dbReference type="HOGENOM" id="CLU_003256_1_0_1"/>
<dbReference type="InParanoid" id="O15818"/>
<dbReference type="OMA" id="HPVWDKD"/>
<dbReference type="PhylomeDB" id="O15818"/>
<dbReference type="PRO" id="PR:O15818"/>
<dbReference type="Proteomes" id="UP000002195">
    <property type="component" value="Chromosome 6"/>
</dbReference>
<dbReference type="GO" id="GO:0005737">
    <property type="term" value="C:cytoplasm"/>
    <property type="evidence" value="ECO:0000318"/>
    <property type="project" value="GO_Central"/>
</dbReference>
<dbReference type="GO" id="GO:0003729">
    <property type="term" value="F:mRNA binding"/>
    <property type="evidence" value="ECO:0000318"/>
    <property type="project" value="GO_Central"/>
</dbReference>
<dbReference type="GO" id="GO:0048312">
    <property type="term" value="P:intracellular distribution of mitochondria"/>
    <property type="evidence" value="ECO:0000315"/>
    <property type="project" value="dictyBase"/>
</dbReference>
<dbReference type="GO" id="GO:0000266">
    <property type="term" value="P:mitochondrial fission"/>
    <property type="evidence" value="ECO:0000315"/>
    <property type="project" value="dictyBase"/>
</dbReference>
<dbReference type="GO" id="GO:0008053">
    <property type="term" value="P:mitochondrial fusion"/>
    <property type="evidence" value="ECO:0000315"/>
    <property type="project" value="dictyBase"/>
</dbReference>
<dbReference type="GO" id="GO:0000281">
    <property type="term" value="P:mitotic cytokinesis"/>
    <property type="evidence" value="ECO:0000315"/>
    <property type="project" value="dictyBase"/>
</dbReference>
<dbReference type="CDD" id="cd15466">
    <property type="entry name" value="CLU-central"/>
    <property type="match status" value="1"/>
</dbReference>
<dbReference type="FunFam" id="3.30.2280.10:FF:000002">
    <property type="entry name" value="Clustered mitochondria protein homolog"/>
    <property type="match status" value="1"/>
</dbReference>
<dbReference type="Gene3D" id="3.30.2280.10">
    <property type="entry name" value="Hypothetical protein (hspc210)"/>
    <property type="match status" value="1"/>
</dbReference>
<dbReference type="Gene3D" id="1.25.40.10">
    <property type="entry name" value="Tetratricopeptide repeat domain"/>
    <property type="match status" value="2"/>
</dbReference>
<dbReference type="HAMAP" id="MF_03013">
    <property type="entry name" value="CLU"/>
    <property type="match status" value="1"/>
</dbReference>
<dbReference type="InterPro" id="IPR033646">
    <property type="entry name" value="CLU-central"/>
</dbReference>
<dbReference type="InterPro" id="IPR025697">
    <property type="entry name" value="CLU_dom"/>
</dbReference>
<dbReference type="InterPro" id="IPR028275">
    <property type="entry name" value="CLU_N"/>
</dbReference>
<dbReference type="InterPro" id="IPR027523">
    <property type="entry name" value="CLU_prot"/>
</dbReference>
<dbReference type="InterPro" id="IPR007967">
    <property type="entry name" value="GSKIP_dom"/>
</dbReference>
<dbReference type="InterPro" id="IPR023231">
    <property type="entry name" value="GSKIP_dom_sf"/>
</dbReference>
<dbReference type="InterPro" id="IPR011990">
    <property type="entry name" value="TPR-like_helical_dom_sf"/>
</dbReference>
<dbReference type="InterPro" id="IPR019734">
    <property type="entry name" value="TPR_rpt"/>
</dbReference>
<dbReference type="PANTHER" id="PTHR12601:SF6">
    <property type="entry name" value="CLUSTERED MITOCHONDRIA PROTEIN HOMOLOG"/>
    <property type="match status" value="1"/>
</dbReference>
<dbReference type="PANTHER" id="PTHR12601">
    <property type="entry name" value="EUKARYOTIC TRANSLATION INITIATION FACTOR 3 SUBUNIT EIF-3"/>
    <property type="match status" value="1"/>
</dbReference>
<dbReference type="Pfam" id="PF13236">
    <property type="entry name" value="CLU"/>
    <property type="match status" value="1"/>
</dbReference>
<dbReference type="Pfam" id="PF15044">
    <property type="entry name" value="CLU_N"/>
    <property type="match status" value="1"/>
</dbReference>
<dbReference type="Pfam" id="PF12807">
    <property type="entry name" value="eIF3_p135"/>
    <property type="match status" value="1"/>
</dbReference>
<dbReference type="Pfam" id="PF05303">
    <property type="entry name" value="GSKIP_dom"/>
    <property type="match status" value="1"/>
</dbReference>
<dbReference type="Pfam" id="PF13374">
    <property type="entry name" value="TPR_10"/>
    <property type="match status" value="1"/>
</dbReference>
<dbReference type="Pfam" id="PF13424">
    <property type="entry name" value="TPR_12"/>
    <property type="match status" value="2"/>
</dbReference>
<dbReference type="SMART" id="SM00028">
    <property type="entry name" value="TPR"/>
    <property type="match status" value="4"/>
</dbReference>
<dbReference type="SUPFAM" id="SSF103107">
    <property type="entry name" value="Hypothetical protein c14orf129, hspc210"/>
    <property type="match status" value="1"/>
</dbReference>
<dbReference type="SUPFAM" id="SSF48452">
    <property type="entry name" value="TPR-like"/>
    <property type="match status" value="2"/>
</dbReference>
<dbReference type="PROSITE" id="PS51823">
    <property type="entry name" value="CLU"/>
    <property type="match status" value="1"/>
</dbReference>
<protein>
    <recommendedName>
        <fullName evidence="1">Clustered mitochondria protein homolog</fullName>
    </recommendedName>
</protein>
<evidence type="ECO:0000255" key="1">
    <source>
        <dbReference type="HAMAP-Rule" id="MF_03013"/>
    </source>
</evidence>
<evidence type="ECO:0000255" key="2">
    <source>
        <dbReference type="PROSITE-ProRule" id="PRU01167"/>
    </source>
</evidence>
<evidence type="ECO:0000256" key="3">
    <source>
        <dbReference type="SAM" id="MobiDB-lite"/>
    </source>
</evidence>
<evidence type="ECO:0000269" key="4">
    <source>
    </source>
</evidence>
<evidence type="ECO:0000305" key="5"/>
<name>CLU_DICDI</name>
<reference key="1">
    <citation type="journal article" date="1997" name="Proc. Natl. Acad. Sci. U.S.A.">
        <title>The cluA-mutant of Dictyostelium identifies a novel class of proteins required for dispersion of mitochondria.</title>
        <authorList>
            <person name="Zhu Q."/>
            <person name="Hulen D."/>
            <person name="Liu T."/>
            <person name="Clarke M."/>
        </authorList>
    </citation>
    <scope>NUCLEOTIDE SEQUENCE [MRNA]</scope>
    <scope>FUNCTION</scope>
    <scope>DISRUPTION PHENOTYPE</scope>
</reference>
<reference key="2">
    <citation type="journal article" date="2005" name="Nature">
        <title>The genome of the social amoeba Dictyostelium discoideum.</title>
        <authorList>
            <person name="Eichinger L."/>
            <person name="Pachebat J.A."/>
            <person name="Gloeckner G."/>
            <person name="Rajandream M.A."/>
            <person name="Sucgang R."/>
            <person name="Berriman M."/>
            <person name="Song J."/>
            <person name="Olsen R."/>
            <person name="Szafranski K."/>
            <person name="Xu Q."/>
            <person name="Tunggal B."/>
            <person name="Kummerfeld S."/>
            <person name="Madera M."/>
            <person name="Konfortov B.A."/>
            <person name="Rivero F."/>
            <person name="Bankier A.T."/>
            <person name="Lehmann R."/>
            <person name="Hamlin N."/>
            <person name="Davies R."/>
            <person name="Gaudet P."/>
            <person name="Fey P."/>
            <person name="Pilcher K."/>
            <person name="Chen G."/>
            <person name="Saunders D."/>
            <person name="Sodergren E.J."/>
            <person name="Davis P."/>
            <person name="Kerhornou A."/>
            <person name="Nie X."/>
            <person name="Hall N."/>
            <person name="Anjard C."/>
            <person name="Hemphill L."/>
            <person name="Bason N."/>
            <person name="Farbrother P."/>
            <person name="Desany B."/>
            <person name="Just E."/>
            <person name="Morio T."/>
            <person name="Rost R."/>
            <person name="Churcher C.M."/>
            <person name="Cooper J."/>
            <person name="Haydock S."/>
            <person name="van Driessche N."/>
            <person name="Cronin A."/>
            <person name="Goodhead I."/>
            <person name="Muzny D.M."/>
            <person name="Mourier T."/>
            <person name="Pain A."/>
            <person name="Lu M."/>
            <person name="Harper D."/>
            <person name="Lindsay R."/>
            <person name="Hauser H."/>
            <person name="James K.D."/>
            <person name="Quiles M."/>
            <person name="Madan Babu M."/>
            <person name="Saito T."/>
            <person name="Buchrieser C."/>
            <person name="Wardroper A."/>
            <person name="Felder M."/>
            <person name="Thangavelu M."/>
            <person name="Johnson D."/>
            <person name="Knights A."/>
            <person name="Loulseged H."/>
            <person name="Mungall K.L."/>
            <person name="Oliver K."/>
            <person name="Price C."/>
            <person name="Quail M.A."/>
            <person name="Urushihara H."/>
            <person name="Hernandez J."/>
            <person name="Rabbinowitsch E."/>
            <person name="Steffen D."/>
            <person name="Sanders M."/>
            <person name="Ma J."/>
            <person name="Kohara Y."/>
            <person name="Sharp S."/>
            <person name="Simmonds M.N."/>
            <person name="Spiegler S."/>
            <person name="Tivey A."/>
            <person name="Sugano S."/>
            <person name="White B."/>
            <person name="Walker D."/>
            <person name="Woodward J.R."/>
            <person name="Winckler T."/>
            <person name="Tanaka Y."/>
            <person name="Shaulsky G."/>
            <person name="Schleicher M."/>
            <person name="Weinstock G.M."/>
            <person name="Rosenthal A."/>
            <person name="Cox E.C."/>
            <person name="Chisholm R.L."/>
            <person name="Gibbs R.A."/>
            <person name="Loomis W.F."/>
            <person name="Platzer M."/>
            <person name="Kay R.R."/>
            <person name="Williams J.G."/>
            <person name="Dear P.H."/>
            <person name="Noegel A.A."/>
            <person name="Barrell B.G."/>
            <person name="Kuspa A."/>
        </authorList>
    </citation>
    <scope>NUCLEOTIDE SEQUENCE [LARGE SCALE GENOMIC DNA]</scope>
    <source>
        <strain>AX4</strain>
    </source>
</reference>
<reference key="3">
    <citation type="submission" date="2009-07" db="UniProtKB">
        <authorList>
            <person name="Bienvenut W.V."/>
            <person name="Ura S."/>
            <person name="Insall R.H."/>
        </authorList>
    </citation>
    <scope>PROTEIN SEQUENCE OF 532-546; 592-605 AND 634-640</scope>
    <scope>IDENTIFICATION BY MASS SPECTROMETRY</scope>
    <source>
        <strain>AX2</strain>
    </source>
</reference>